<feature type="chain" id="PRO_0000202347" description="Uncharacterized protein TP_0900">
    <location>
        <begin position="1"/>
        <end position="797"/>
    </location>
</feature>
<sequence length="797" mass="89504">MTEIEACIKTVRTPYRRLFVFPSRIVAQGWLRQSLSLLGVRTVPGRLCLSWDEFKKRCFQCAPCAHRTPISEPLRLLFAHSVVQRNARQAAEGRALFCNLIPPAYAQDGAVFVQWLARILPQLGSWQRRVESHCMPPKDAVSRNTFDGRDARAYAQSAEAQDLQTLKAHYEQFLRAHALFEPSWDTPQFCAQGNTYVIVYPQLMQDFAEYAPVLQEAARATAGVLTFLPVPPFRQDTPLCCFSNVREEITAVALQVERLLRTGTPVSQIAVSVANLEELQPYVEREFRLRDIEPEVRAGFCLGAHPAGRMFSQLREFVRSHGTLKSVRALLLNPHIRWADPQGAQAVVQYGLQQACIRSWKQSGTYCNVWLQAFALHCERTEQERQHQQCAQRFFLTLLRFARALVEARSFVRMQKAYGAFRAACLLPASAHTSGAEEEIASSAFASCSAGEDDAVMARCVCVLQELAALERRFAHVVPPDPYSFFVQQLAQQMYVPVRAGVGLAIFPYRVAAAAPFLHHFVINVSHEASSVRYQRGTFLRADVRAAFGFEDEDVTEAFLSAYATAQTVYFSCSVQAFSGVQRPNRFFSNVHPPVSSTLTGRASQTPSPAGIASETGGAVPQYPAVRYEEDALQAEQDLYAQGAPVPSSLYRTQQERLRKAASLIPAAGRSYIRDSFAQALPPLTAVLHARHFHHAAVKVSQTDLNLFFRCPAAWFLERVLDVAPLSRRPRLVDPRVLGVFSHVVLERLYNRIACEDECFFSAHMERYRLWTQEAIEQVFSERAVRAGPLVWALRAA</sequence>
<proteinExistence type="predicted"/>
<reference key="1">
    <citation type="journal article" date="1998" name="Science">
        <title>Complete genome sequence of Treponema pallidum, the syphilis spirochete.</title>
        <authorList>
            <person name="Fraser C.M."/>
            <person name="Norris S.J."/>
            <person name="Weinstock G.M."/>
            <person name="White O."/>
            <person name="Sutton G.G."/>
            <person name="Dodson R.J."/>
            <person name="Gwinn M.L."/>
            <person name="Hickey E.K."/>
            <person name="Clayton R.A."/>
            <person name="Ketchum K.A."/>
            <person name="Sodergren E."/>
            <person name="Hardham J.M."/>
            <person name="McLeod M.P."/>
            <person name="Salzberg S.L."/>
            <person name="Peterson J.D."/>
            <person name="Khalak H.G."/>
            <person name="Richardson D.L."/>
            <person name="Howell J.K."/>
            <person name="Chidambaram M."/>
            <person name="Utterback T.R."/>
            <person name="McDonald L.A."/>
            <person name="Artiach P."/>
            <person name="Bowman C."/>
            <person name="Cotton M.D."/>
            <person name="Fujii C."/>
            <person name="Garland S.A."/>
            <person name="Hatch B."/>
            <person name="Horst K."/>
            <person name="Roberts K.M."/>
            <person name="Sandusky M."/>
            <person name="Weidman J.F."/>
            <person name="Smith H.O."/>
            <person name="Venter J.C."/>
        </authorList>
    </citation>
    <scope>NUCLEOTIDE SEQUENCE [LARGE SCALE GENOMIC DNA]</scope>
    <source>
        <strain>Nichols</strain>
    </source>
</reference>
<organism>
    <name type="scientific">Treponema pallidum (strain Nichols)</name>
    <dbReference type="NCBI Taxonomy" id="243276"/>
    <lineage>
        <taxon>Bacteria</taxon>
        <taxon>Pseudomonadati</taxon>
        <taxon>Spirochaetota</taxon>
        <taxon>Spirochaetia</taxon>
        <taxon>Spirochaetales</taxon>
        <taxon>Treponemataceae</taxon>
        <taxon>Treponema</taxon>
    </lineage>
</organism>
<dbReference type="EMBL" id="AE000520">
    <property type="protein sequence ID" value="AAC65868.1"/>
    <property type="molecule type" value="Genomic_DNA"/>
</dbReference>
<dbReference type="PIR" id="A71267">
    <property type="entry name" value="A71267"/>
</dbReference>
<dbReference type="RefSeq" id="WP_010882343.1">
    <property type="nucleotide sequence ID" value="NC_000919.1"/>
</dbReference>
<dbReference type="STRING" id="243276.TP_0900"/>
<dbReference type="EnsemblBacteria" id="AAC65868">
    <property type="protein sequence ID" value="AAC65868"/>
    <property type="gene ID" value="TP_0900"/>
</dbReference>
<dbReference type="KEGG" id="tpa:TP_0900"/>
<dbReference type="eggNOG" id="COG2887">
    <property type="taxonomic scope" value="Bacteria"/>
</dbReference>
<dbReference type="HOGENOM" id="CLU_012127_0_0_12"/>
<dbReference type="Proteomes" id="UP000000811">
    <property type="component" value="Chromosome"/>
</dbReference>
<dbReference type="InterPro" id="IPR027417">
    <property type="entry name" value="P-loop_NTPase"/>
</dbReference>
<dbReference type="InterPro" id="IPR038726">
    <property type="entry name" value="PDDEXK_AddAB-type"/>
</dbReference>
<dbReference type="Pfam" id="PF12705">
    <property type="entry name" value="PDDEXK_1"/>
    <property type="match status" value="1"/>
</dbReference>
<dbReference type="SUPFAM" id="SSF52540">
    <property type="entry name" value="P-loop containing nucleoside triphosphate hydrolases"/>
    <property type="match status" value="1"/>
</dbReference>
<protein>
    <recommendedName>
        <fullName>Uncharacterized protein TP_0900</fullName>
    </recommendedName>
</protein>
<accession>O83870</accession>
<gene>
    <name type="ordered locus">TP_0900</name>
</gene>
<name>Y900_TREPA</name>
<keyword id="KW-1185">Reference proteome</keyword>